<feature type="chain" id="PRO_1000068439" description="Hydroxymethylglutaryl-CoA synthase">
    <location>
        <begin position="1"/>
        <end position="349"/>
    </location>
</feature>
<feature type="active site" description="Proton donor/acceptor" evidence="1">
    <location>
        <position position="81"/>
    </location>
</feature>
<feature type="active site" description="Acyl-thioester intermediate" evidence="1">
    <location>
        <position position="113"/>
    </location>
</feature>
<feature type="active site" description="Proton donor/acceptor" evidence="1">
    <location>
        <position position="237"/>
    </location>
</feature>
<feature type="binding site" evidence="1">
    <location>
        <position position="29"/>
    </location>
    <ligand>
        <name>(3S)-3-hydroxy-3-methylglutaryl-CoA</name>
        <dbReference type="ChEBI" id="CHEBI:43074"/>
    </ligand>
</feature>
<feature type="binding site" evidence="1">
    <location>
        <position position="30"/>
    </location>
    <ligand>
        <name>(3S)-3-hydroxy-3-methylglutaryl-CoA</name>
        <dbReference type="ChEBI" id="CHEBI:43074"/>
    </ligand>
</feature>
<feature type="binding site" evidence="1">
    <location>
        <position position="113"/>
    </location>
    <ligand>
        <name>(3S)-3-hydroxy-3-methylglutaryl-CoA</name>
        <dbReference type="ChEBI" id="CHEBI:43074"/>
    </ligand>
</feature>
<feature type="binding site" evidence="1">
    <location>
        <position position="154"/>
    </location>
    <ligand>
        <name>(3S)-3-hydroxy-3-methylglutaryl-CoA</name>
        <dbReference type="ChEBI" id="CHEBI:43074"/>
    </ligand>
</feature>
<feature type="binding site" evidence="1">
    <location>
        <position position="202"/>
    </location>
    <ligand>
        <name>CoA</name>
        <dbReference type="ChEBI" id="CHEBI:57287"/>
        <note>ligand shared with acetoacetyl-CoA thiolase</note>
    </ligand>
</feature>
<feature type="binding site" evidence="1">
    <location>
        <position position="204"/>
    </location>
    <ligand>
        <name>(3S)-3-hydroxy-3-methylglutaryl-CoA</name>
        <dbReference type="ChEBI" id="CHEBI:43074"/>
    </ligand>
</feature>
<feature type="binding site" evidence="1">
    <location>
        <position position="237"/>
    </location>
    <ligand>
        <name>(3S)-3-hydroxy-3-methylglutaryl-CoA</name>
        <dbReference type="ChEBI" id="CHEBI:43074"/>
    </ligand>
</feature>
<feature type="binding site" evidence="1">
    <location>
        <position position="242"/>
    </location>
    <ligand>
        <name>CoA</name>
        <dbReference type="ChEBI" id="CHEBI:57287"/>
        <note>ligand shared with acetoacetyl-CoA thiolase</note>
    </ligand>
</feature>
<feature type="binding site" evidence="1">
    <location>
        <position position="246"/>
    </location>
    <ligand>
        <name>(3S)-3-hydroxy-3-methylglutaryl-CoA</name>
        <dbReference type="ChEBI" id="CHEBI:43074"/>
    </ligand>
</feature>
<feature type="binding site" evidence="1">
    <location>
        <position position="269"/>
    </location>
    <ligand>
        <name>(3S)-3-hydroxy-3-methylglutaryl-CoA</name>
        <dbReference type="ChEBI" id="CHEBI:43074"/>
    </ligand>
</feature>
<feature type="binding site" evidence="1">
    <location>
        <position position="299"/>
    </location>
    <ligand>
        <name>(3S)-3-hydroxy-3-methylglutaryl-CoA</name>
        <dbReference type="ChEBI" id="CHEBI:43074"/>
    </ligand>
</feature>
<name>HMGCS_METBF</name>
<gene>
    <name type="ordered locus">Mbar_A0551</name>
</gene>
<protein>
    <recommendedName>
        <fullName evidence="1">Hydroxymethylglutaryl-CoA synthase</fullName>
        <shortName evidence="1">HMG-CoA synthase</shortName>
        <shortName evidence="1">HMGCS</shortName>
        <ecNumber evidence="1">2.3.3.10</ecNumber>
    </recommendedName>
</protein>
<sequence length="349" mass="37113">MTIGIVSYGAYVPRYRIKVEEIARVWGDDANALKSGLMVYEKSVPDIDEDAATIAVEAARYAMTRSGVDPERIGAVYTGSESHPYAVKPTSTIVSQAIGATPNMTAADFEFACKAGTAAVQACMGLVSSGMIDLGMAIGADVSQGAPGDALEYTAAAGGVACLIGKKESELAAIIEDTYSFTTDTPDFWRREGMPYPEHGGRFTGEPGYFKHVTNGAKGLLNKLGTKPEDYDYAVFHQPNGKFPTKAAKTLGFTKAQIAPGLVVPKIGNTYSGSCLMGIAATLDQAKPGDRIFATAFGSGAGSDAFSITVTDRIEEIRNRAPTVSELIKDPIYIDYARYAKHKGKIRRS</sequence>
<keyword id="KW-0012">Acyltransferase</keyword>
<keyword id="KW-0414">Isoprene biosynthesis</keyword>
<keyword id="KW-0808">Transferase</keyword>
<accession>Q46F10</accession>
<proteinExistence type="inferred from homology"/>
<evidence type="ECO:0000255" key="1">
    <source>
        <dbReference type="HAMAP-Rule" id="MF_01409"/>
    </source>
</evidence>
<organism>
    <name type="scientific">Methanosarcina barkeri (strain Fusaro / DSM 804)</name>
    <dbReference type="NCBI Taxonomy" id="269797"/>
    <lineage>
        <taxon>Archaea</taxon>
        <taxon>Methanobacteriati</taxon>
        <taxon>Methanobacteriota</taxon>
        <taxon>Stenosarchaea group</taxon>
        <taxon>Methanomicrobia</taxon>
        <taxon>Methanosarcinales</taxon>
        <taxon>Methanosarcinaceae</taxon>
        <taxon>Methanosarcina</taxon>
    </lineage>
</organism>
<reference key="1">
    <citation type="journal article" date="2006" name="J. Bacteriol.">
        <title>The Methanosarcina barkeri genome: comparative analysis with Methanosarcina acetivorans and Methanosarcina mazei reveals extensive rearrangement within methanosarcinal genomes.</title>
        <authorList>
            <person name="Maeder D.L."/>
            <person name="Anderson I."/>
            <person name="Brettin T.S."/>
            <person name="Bruce D.C."/>
            <person name="Gilna P."/>
            <person name="Han C.S."/>
            <person name="Lapidus A."/>
            <person name="Metcalf W.W."/>
            <person name="Saunders E."/>
            <person name="Tapia R."/>
            <person name="Sowers K.R."/>
        </authorList>
    </citation>
    <scope>NUCLEOTIDE SEQUENCE [LARGE SCALE GENOMIC DNA]</scope>
    <source>
        <strain>Fusaro / DSM 804</strain>
    </source>
</reference>
<comment type="function">
    <text evidence="1">Catalyzes the condensation of acetyl-CoA with acetoacetyl-CoA to form 3-hydroxy-3-methylglutaryl-CoA (HMG-CoA). Functions in the mevalonate (MVA) pathway leading to isopentenyl diphosphate (IPP), a key precursor for the biosynthesis of isoprenoid compounds that are building blocks of archaeal membrane lipids.</text>
</comment>
<comment type="catalytic activity">
    <reaction evidence="1">
        <text>acetoacetyl-CoA + acetyl-CoA + H2O = (3S)-3-hydroxy-3-methylglutaryl-CoA + CoA + H(+)</text>
        <dbReference type="Rhea" id="RHEA:10188"/>
        <dbReference type="ChEBI" id="CHEBI:15377"/>
        <dbReference type="ChEBI" id="CHEBI:15378"/>
        <dbReference type="ChEBI" id="CHEBI:43074"/>
        <dbReference type="ChEBI" id="CHEBI:57286"/>
        <dbReference type="ChEBI" id="CHEBI:57287"/>
        <dbReference type="ChEBI" id="CHEBI:57288"/>
        <dbReference type="EC" id="2.3.3.10"/>
    </reaction>
    <physiologicalReaction direction="left-to-right" evidence="1">
        <dbReference type="Rhea" id="RHEA:10189"/>
    </physiologicalReaction>
</comment>
<comment type="pathway">
    <text evidence="1">Metabolic intermediate biosynthesis; (R)-mevalonate biosynthesis; (R)-mevalonate from acetyl-CoA: step 2/3.</text>
</comment>
<comment type="subunit">
    <text evidence="1">Interacts with acetoacetyl-CoA thiolase that catalyzes the precedent step in the pathway and with a DUF35 protein. The acetoacetyl-CoA thiolase/HMG-CoA synthase complex channels the intermediate via a fused CoA-binding site, which allows for efficient coupling of the endergonic thiolase reaction with the exergonic HMGCS reaction.</text>
</comment>
<comment type="similarity">
    <text evidence="1">Belongs to the thiolase-like superfamily. Archaeal HMG-CoA synthase family.</text>
</comment>
<dbReference type="EC" id="2.3.3.10" evidence="1"/>
<dbReference type="EMBL" id="CP000099">
    <property type="protein sequence ID" value="AAZ69532.1"/>
    <property type="molecule type" value="Genomic_DNA"/>
</dbReference>
<dbReference type="SMR" id="Q46F10"/>
<dbReference type="STRING" id="269797.Mbar_A0551"/>
<dbReference type="PaxDb" id="269797-Mbar_A0551"/>
<dbReference type="KEGG" id="mba:Mbar_A0551"/>
<dbReference type="eggNOG" id="arCOG01767">
    <property type="taxonomic scope" value="Archaea"/>
</dbReference>
<dbReference type="HOGENOM" id="CLU_039592_7_0_2"/>
<dbReference type="OrthoDB" id="5812at2157"/>
<dbReference type="UniPathway" id="UPA00058">
    <property type="reaction ID" value="UER00102"/>
</dbReference>
<dbReference type="GO" id="GO:0003985">
    <property type="term" value="F:acetyl-CoA C-acetyltransferase activity"/>
    <property type="evidence" value="ECO:0007669"/>
    <property type="project" value="UniProtKB-UniRule"/>
</dbReference>
<dbReference type="GO" id="GO:0004421">
    <property type="term" value="F:hydroxymethylglutaryl-CoA synthase activity"/>
    <property type="evidence" value="ECO:0007669"/>
    <property type="project" value="InterPro"/>
</dbReference>
<dbReference type="GO" id="GO:0010142">
    <property type="term" value="P:farnesyl diphosphate biosynthetic process, mevalonate pathway"/>
    <property type="evidence" value="ECO:0007669"/>
    <property type="project" value="TreeGrafter"/>
</dbReference>
<dbReference type="GO" id="GO:0019287">
    <property type="term" value="P:isopentenyl diphosphate biosynthetic process, mevalonate pathway"/>
    <property type="evidence" value="ECO:0007669"/>
    <property type="project" value="UniProtKB-UniRule"/>
</dbReference>
<dbReference type="CDD" id="cd00827">
    <property type="entry name" value="init_cond_enzymes"/>
    <property type="match status" value="1"/>
</dbReference>
<dbReference type="FunFam" id="3.40.47.10:FF:000046">
    <property type="entry name" value="UPF0219 protein M1627_1703"/>
    <property type="match status" value="1"/>
</dbReference>
<dbReference type="Gene3D" id="3.40.47.10">
    <property type="match status" value="1"/>
</dbReference>
<dbReference type="HAMAP" id="MF_01409">
    <property type="entry name" value="HMG_CoA_synth_arch"/>
    <property type="match status" value="1"/>
</dbReference>
<dbReference type="InterPro" id="IPR013747">
    <property type="entry name" value="ACP_syn_III_C"/>
</dbReference>
<dbReference type="InterPro" id="IPR004656">
    <property type="entry name" value="HMG_CoA_Synthase"/>
</dbReference>
<dbReference type="InterPro" id="IPR016039">
    <property type="entry name" value="Thiolase-like"/>
</dbReference>
<dbReference type="NCBIfam" id="TIGR00748">
    <property type="entry name" value="HMG_CoA_syn_Arc"/>
    <property type="match status" value="1"/>
</dbReference>
<dbReference type="NCBIfam" id="NF003274">
    <property type="entry name" value="PRK04262.1"/>
    <property type="match status" value="1"/>
</dbReference>
<dbReference type="PANTHER" id="PTHR43323">
    <property type="entry name" value="3-HYDROXY-3-METHYLGLUTARYL COENZYME A SYNTHASE"/>
    <property type="match status" value="1"/>
</dbReference>
<dbReference type="PANTHER" id="PTHR43323:SF2">
    <property type="entry name" value="HYDROXYMETHYLGLUTARYL-COA SYNTHASE"/>
    <property type="match status" value="1"/>
</dbReference>
<dbReference type="Pfam" id="PF08541">
    <property type="entry name" value="ACP_syn_III_C"/>
    <property type="match status" value="1"/>
</dbReference>
<dbReference type="SUPFAM" id="SSF53901">
    <property type="entry name" value="Thiolase-like"/>
    <property type="match status" value="2"/>
</dbReference>